<sequence length="446" mass="52757">MAVQLKWPILGVIIPCIIIFSLSYGSHYFILRHHLTMKQQLIYEFYVTMIWISYLLAIYTNPGRVPKNYKPSLASSTRIEQTEDDSDGLGLESREDETLIREEPISGDRCEWIRYCKKCNNYKPPRSHHCKICQQCVLQMDHHCPWTLNCVGNNNLPHFMRFLGWIIWGTGYLMIQLIKLIINYYENSNMPHYLFNKTELVAIIAITPLNFFVFASILVLFIRCLINICKGMTQIEIWEWERLELQWSSKRLWRLIRFNYGRLHKGKPFPELNTWTNTTNNVNYNDNDDDGDEDVELINLATNNNEDSTIVPQNFTIDDLIFPYNLGIWKNLVNALGYPYMWLIPFGKPKSNGYQPQISQDYKQDDQLNLPWPPDGIRQKEIEINVLQQQGYQRDREEEDEEELRSIRNYQELRRRLDPRLNVQRSDFINDMGEGLTDFGVDEDSD</sequence>
<feature type="chain" id="PRO_0000212962" description="Palmitoyltransferase PFA4">
    <location>
        <begin position="1"/>
        <end position="446"/>
    </location>
</feature>
<feature type="topological domain" description="Cytoplasmic" evidence="1">
    <location>
        <begin position="1"/>
        <end position="8"/>
    </location>
</feature>
<feature type="transmembrane region" description="Helical" evidence="1">
    <location>
        <begin position="9"/>
        <end position="29"/>
    </location>
</feature>
<feature type="topological domain" description="Lumenal" evidence="1">
    <location>
        <begin position="30"/>
        <end position="40"/>
    </location>
</feature>
<feature type="transmembrane region" description="Helical" evidence="1">
    <location>
        <begin position="41"/>
        <end position="61"/>
    </location>
</feature>
<feature type="topological domain" description="Cytoplasmic" evidence="1">
    <location>
        <begin position="62"/>
        <end position="161"/>
    </location>
</feature>
<feature type="transmembrane region" description="Helical" evidence="1">
    <location>
        <begin position="162"/>
        <end position="182"/>
    </location>
</feature>
<feature type="topological domain" description="Lumenal" evidence="1">
    <location>
        <begin position="183"/>
        <end position="201"/>
    </location>
</feature>
<feature type="transmembrane region" description="Helical" evidence="1">
    <location>
        <begin position="202"/>
        <end position="222"/>
    </location>
</feature>
<feature type="topological domain" description="Cytoplasmic" evidence="1">
    <location>
        <begin position="223"/>
        <end position="446"/>
    </location>
</feature>
<feature type="domain" description="DHHC" evidence="2">
    <location>
        <begin position="114"/>
        <end position="164"/>
    </location>
</feature>
<feature type="active site" description="S-palmitoyl cysteine intermediate" evidence="1">
    <location>
        <position position="144"/>
    </location>
</feature>
<proteinExistence type="inferred from homology"/>
<name>PFA4_CANAL</name>
<comment type="function">
    <text evidence="1">Mediates the reversible addition of palmitate to target proteins, thereby regulating their membrane association and biological function.</text>
</comment>
<comment type="catalytic activity">
    <reaction evidence="1">
        <text>L-cysteinyl-[protein] + hexadecanoyl-CoA = S-hexadecanoyl-L-cysteinyl-[protein] + CoA</text>
        <dbReference type="Rhea" id="RHEA:36683"/>
        <dbReference type="Rhea" id="RHEA-COMP:10131"/>
        <dbReference type="Rhea" id="RHEA-COMP:11032"/>
        <dbReference type="ChEBI" id="CHEBI:29950"/>
        <dbReference type="ChEBI" id="CHEBI:57287"/>
        <dbReference type="ChEBI" id="CHEBI:57379"/>
        <dbReference type="ChEBI" id="CHEBI:74151"/>
        <dbReference type="EC" id="2.3.1.225"/>
    </reaction>
</comment>
<comment type="subcellular location">
    <subcellularLocation>
        <location evidence="1">Endoplasmic reticulum membrane</location>
        <topology evidence="1">Multi-pass membrane protein</topology>
    </subcellularLocation>
</comment>
<comment type="domain">
    <text evidence="1">The DHHC domain is required for palmitoyltransferase activity.</text>
</comment>
<comment type="similarity">
    <text evidence="1">Belongs to the DHHC palmitoyltransferase family. PFA4 subfamily.</text>
</comment>
<protein>
    <recommendedName>
        <fullName evidence="1">Palmitoyltransferase PFA4</fullName>
        <ecNumber evidence="1">2.3.1.225</ecNumber>
    </recommendedName>
    <alternativeName>
        <fullName evidence="1">Protein S-acyltransferase</fullName>
        <shortName evidence="1">PAT</shortName>
    </alternativeName>
    <alternativeName>
        <fullName evidence="1">Protein fatty acyltransferase 4</fullName>
    </alternativeName>
</protein>
<accession>Q5AGV7</accession>
<accession>A0A1D8PQV4</accession>
<accession>Q3MPJ2</accession>
<gene>
    <name evidence="1" type="primary">PFA4</name>
    <name type="ordered locus">CAALFM_C701480WA</name>
    <name type="ORF">CaJ7.0163</name>
    <name type="ORF">CaO19.13934</name>
    <name type="ORF">CaO19.6581</name>
</gene>
<keyword id="KW-0012">Acyltransferase</keyword>
<keyword id="KW-0256">Endoplasmic reticulum</keyword>
<keyword id="KW-0449">Lipoprotein</keyword>
<keyword id="KW-0472">Membrane</keyword>
<keyword id="KW-0564">Palmitate</keyword>
<keyword id="KW-1185">Reference proteome</keyword>
<keyword id="KW-0808">Transferase</keyword>
<keyword id="KW-0812">Transmembrane</keyword>
<keyword id="KW-1133">Transmembrane helix</keyword>
<organism>
    <name type="scientific">Candida albicans (strain SC5314 / ATCC MYA-2876)</name>
    <name type="common">Yeast</name>
    <dbReference type="NCBI Taxonomy" id="237561"/>
    <lineage>
        <taxon>Eukaryota</taxon>
        <taxon>Fungi</taxon>
        <taxon>Dikarya</taxon>
        <taxon>Ascomycota</taxon>
        <taxon>Saccharomycotina</taxon>
        <taxon>Pichiomycetes</taxon>
        <taxon>Debaryomycetaceae</taxon>
        <taxon>Candida/Lodderomyces clade</taxon>
        <taxon>Candida</taxon>
    </lineage>
</organism>
<evidence type="ECO:0000255" key="1">
    <source>
        <dbReference type="HAMAP-Rule" id="MF_03199"/>
    </source>
</evidence>
<evidence type="ECO:0000255" key="2">
    <source>
        <dbReference type="PROSITE-ProRule" id="PRU00067"/>
    </source>
</evidence>
<dbReference type="EC" id="2.3.1.225" evidence="1"/>
<dbReference type="EMBL" id="AP006852">
    <property type="protein sequence ID" value="BAE44668.1"/>
    <property type="molecule type" value="Genomic_DNA"/>
</dbReference>
<dbReference type="EMBL" id="CP017629">
    <property type="protein sequence ID" value="AOW30515.1"/>
    <property type="molecule type" value="Genomic_DNA"/>
</dbReference>
<dbReference type="RefSeq" id="XP_721417.1">
    <property type="nucleotide sequence ID" value="XM_716324.1"/>
</dbReference>
<dbReference type="SMR" id="Q5AGV7"/>
<dbReference type="FunCoup" id="Q5AGV7">
    <property type="interactions" value="41"/>
</dbReference>
<dbReference type="STRING" id="237561.Q5AGV7"/>
<dbReference type="EnsemblFungi" id="C7_01480W_A-T">
    <property type="protein sequence ID" value="C7_01480W_A-T-p1"/>
    <property type="gene ID" value="C7_01480W_A"/>
</dbReference>
<dbReference type="GeneID" id="3636956"/>
<dbReference type="KEGG" id="cal:CAALFM_C701480WA"/>
<dbReference type="CGD" id="CAL0000201029">
    <property type="gene designation" value="orf19.13934"/>
</dbReference>
<dbReference type="VEuPathDB" id="FungiDB:C7_01480W_A"/>
<dbReference type="eggNOG" id="KOG1314">
    <property type="taxonomic scope" value="Eukaryota"/>
</dbReference>
<dbReference type="HOGENOM" id="CLU_027721_8_0_1"/>
<dbReference type="InParanoid" id="Q5AGV7"/>
<dbReference type="OMA" id="TMNCVGY"/>
<dbReference type="OrthoDB" id="331948at2759"/>
<dbReference type="Proteomes" id="UP000000559">
    <property type="component" value="Chromosome 7"/>
</dbReference>
<dbReference type="GO" id="GO:0005783">
    <property type="term" value="C:endoplasmic reticulum"/>
    <property type="evidence" value="ECO:0000318"/>
    <property type="project" value="GO_Central"/>
</dbReference>
<dbReference type="GO" id="GO:0005789">
    <property type="term" value="C:endoplasmic reticulum membrane"/>
    <property type="evidence" value="ECO:0007669"/>
    <property type="project" value="UniProtKB-SubCell"/>
</dbReference>
<dbReference type="GO" id="GO:0005794">
    <property type="term" value="C:Golgi apparatus"/>
    <property type="evidence" value="ECO:0000318"/>
    <property type="project" value="GO_Central"/>
</dbReference>
<dbReference type="GO" id="GO:0019706">
    <property type="term" value="F:protein-cysteine S-palmitoyltransferase activity"/>
    <property type="evidence" value="ECO:0000318"/>
    <property type="project" value="GO_Central"/>
</dbReference>
<dbReference type="GO" id="GO:0006612">
    <property type="term" value="P:protein targeting to membrane"/>
    <property type="evidence" value="ECO:0000318"/>
    <property type="project" value="GO_Central"/>
</dbReference>
<dbReference type="HAMAP" id="MF_03199">
    <property type="entry name" value="DHHC_PAT_PFA4"/>
    <property type="match status" value="1"/>
</dbReference>
<dbReference type="InterPro" id="IPR001594">
    <property type="entry name" value="Palmitoyltrfase_DHHC"/>
</dbReference>
<dbReference type="InterPro" id="IPR033682">
    <property type="entry name" value="PFA4"/>
</dbReference>
<dbReference type="InterPro" id="IPR039859">
    <property type="entry name" value="PFA4/ZDH16/20/ERF2-like"/>
</dbReference>
<dbReference type="PANTHER" id="PTHR12246">
    <property type="entry name" value="PALMITOYLTRANSFERASE ZDHHC16"/>
    <property type="match status" value="1"/>
</dbReference>
<dbReference type="Pfam" id="PF01529">
    <property type="entry name" value="DHHC"/>
    <property type="match status" value="1"/>
</dbReference>
<dbReference type="PROSITE" id="PS50216">
    <property type="entry name" value="DHHC"/>
    <property type="match status" value="1"/>
</dbReference>
<reference key="1">
    <citation type="journal article" date="2005" name="Genetics">
        <title>Sequence finishing and gene mapping for Candida albicans chromosome 7 and syntenic analysis against the Saccharomyces cerevisiae genome.</title>
        <authorList>
            <person name="Chibana H."/>
            <person name="Oka N."/>
            <person name="Nakayama H."/>
            <person name="Aoyama T."/>
            <person name="Magee B.B."/>
            <person name="Magee P.T."/>
            <person name="Mikami Y."/>
        </authorList>
    </citation>
    <scope>NUCLEOTIDE SEQUENCE [LARGE SCALE GENOMIC DNA]</scope>
    <source>
        <strain>SC5314 / ATCC MYA-2876</strain>
    </source>
</reference>
<reference key="2">
    <citation type="journal article" date="2004" name="Proc. Natl. Acad. Sci. U.S.A.">
        <title>The diploid genome sequence of Candida albicans.</title>
        <authorList>
            <person name="Jones T."/>
            <person name="Federspiel N.A."/>
            <person name="Chibana H."/>
            <person name="Dungan J."/>
            <person name="Kalman S."/>
            <person name="Magee B.B."/>
            <person name="Newport G."/>
            <person name="Thorstenson Y.R."/>
            <person name="Agabian N."/>
            <person name="Magee P.T."/>
            <person name="Davis R.W."/>
            <person name="Scherer S."/>
        </authorList>
    </citation>
    <scope>NUCLEOTIDE SEQUENCE [LARGE SCALE GENOMIC DNA]</scope>
    <source>
        <strain>SC5314 / ATCC MYA-2876</strain>
    </source>
</reference>
<reference key="3">
    <citation type="journal article" date="2007" name="Genome Biol.">
        <title>Assembly of the Candida albicans genome into sixteen supercontigs aligned on the eight chromosomes.</title>
        <authorList>
            <person name="van het Hoog M."/>
            <person name="Rast T.J."/>
            <person name="Martchenko M."/>
            <person name="Grindle S."/>
            <person name="Dignard D."/>
            <person name="Hogues H."/>
            <person name="Cuomo C."/>
            <person name="Berriman M."/>
            <person name="Scherer S."/>
            <person name="Magee B.B."/>
            <person name="Whiteway M."/>
            <person name="Chibana H."/>
            <person name="Nantel A."/>
            <person name="Magee P.T."/>
        </authorList>
    </citation>
    <scope>GENOME REANNOTATION</scope>
    <source>
        <strain>SC5314 / ATCC MYA-2876</strain>
    </source>
</reference>
<reference key="4">
    <citation type="journal article" date="2013" name="Genome Biol.">
        <title>Assembly of a phased diploid Candida albicans genome facilitates allele-specific measurements and provides a simple model for repeat and indel structure.</title>
        <authorList>
            <person name="Muzzey D."/>
            <person name="Schwartz K."/>
            <person name="Weissman J.S."/>
            <person name="Sherlock G."/>
        </authorList>
    </citation>
    <scope>NUCLEOTIDE SEQUENCE [LARGE SCALE GENOMIC DNA]</scope>
    <scope>GENOME REANNOTATION</scope>
    <source>
        <strain>SC5314 / ATCC MYA-2876</strain>
    </source>
</reference>